<accession>O76818</accession>
<accession>C0HKV1</accession>
<accession>C0HKV2</accession>
<accession>C0HKV3</accession>
<accession>C0HKV4</accession>
<accession>C0HKV5</accession>
<accession>C0HKV6</accession>
<accession>C0HKV7</accession>
<feature type="signal peptide" evidence="3">
    <location>
        <begin position="1"/>
        <end position="19"/>
    </location>
</feature>
<feature type="peptide" id="PRO_0000444160" description="Diapause hormone" evidence="3">
    <location>
        <begin position="20"/>
        <end position="46"/>
    </location>
</feature>
<feature type="peptide" id="PRO_0000444161" description="PBAN precursor-related peptide 1" evidence="3">
    <location>
        <begin position="50"/>
        <end position="74"/>
    </location>
</feature>
<feature type="peptide" id="PRO_0000444162" description="PBAN precursor-related peptide 2" evidence="3">
    <location>
        <begin position="75"/>
        <end position="93"/>
    </location>
</feature>
<feature type="peptide" id="PRO_0000029916" description="Alpha-subesophageal ganglion neuropeptide" evidence="3">
    <location>
        <begin position="96"/>
        <end position="102"/>
    </location>
</feature>
<feature type="peptide" id="PRO_0000029917" description="Beta-subesophageal ganglion neuropeptide" evidence="3">
    <location>
        <begin position="105"/>
        <end position="122"/>
    </location>
</feature>
<feature type="peptide" id="PRO_0000029918" description="Pheromone biosynthesis-activating neuropeptide" evidence="6">
    <location>
        <begin position="126"/>
        <end position="158"/>
    </location>
</feature>
<feature type="peptide" id="PRO_0000029919" description="Gamma-subesophageal ganglion neuropeptide" evidence="3">
    <location>
        <begin position="161"/>
        <end position="168"/>
    </location>
</feature>
<feature type="peptide" id="PRO_0000444163" description="PBAN precursor-related peptide 3" evidence="3">
    <location>
        <begin position="171"/>
        <end position="184"/>
    </location>
</feature>
<feature type="propeptide" id="PRO_0000444164" evidence="7">
    <location>
        <begin position="186"/>
        <end position="193"/>
    </location>
</feature>
<feature type="region of interest" description="Disordered" evidence="2">
    <location>
        <begin position="124"/>
        <end position="158"/>
    </location>
</feature>
<feature type="compositionally biased region" description="Basic and acidic residues" evidence="2">
    <location>
        <begin position="138"/>
        <end position="151"/>
    </location>
</feature>
<feature type="modified residue" description="Isoleucine amide" evidence="3">
    <location>
        <position position="46"/>
    </location>
</feature>
<feature type="modified residue" description="Leucine amide" evidence="3">
    <location>
        <position position="102"/>
    </location>
</feature>
<feature type="modified residue" description="Leucine amide" evidence="3">
    <location>
        <position position="122"/>
    </location>
</feature>
<feature type="modified residue" description="Leucine amide" evidence="1">
    <location>
        <position position="158"/>
    </location>
</feature>
<feature type="modified residue" description="Leucine amide" evidence="3">
    <location>
        <position position="168"/>
    </location>
</feature>
<dbReference type="EMBL" id="AJ009674">
    <property type="protein sequence ID" value="CAA08774.1"/>
    <property type="molecule type" value="mRNA"/>
</dbReference>
<dbReference type="GO" id="GO:0005576">
    <property type="term" value="C:extracellular region"/>
    <property type="evidence" value="ECO:0007669"/>
    <property type="project" value="UniProtKB-SubCell"/>
</dbReference>
<dbReference type="GO" id="GO:0005184">
    <property type="term" value="F:neuropeptide hormone activity"/>
    <property type="evidence" value="ECO:0007669"/>
    <property type="project" value="InterPro"/>
</dbReference>
<dbReference type="GO" id="GO:0007218">
    <property type="term" value="P:neuropeptide signaling pathway"/>
    <property type="evidence" value="ECO:0007669"/>
    <property type="project" value="UniProtKB-KW"/>
</dbReference>
<dbReference type="GO" id="GO:0042811">
    <property type="term" value="P:pheromone biosynthetic process"/>
    <property type="evidence" value="ECO:0007669"/>
    <property type="project" value="InterPro"/>
</dbReference>
<dbReference type="GO" id="GO:0019236">
    <property type="term" value="P:response to pheromone"/>
    <property type="evidence" value="ECO:0007669"/>
    <property type="project" value="UniProtKB-KW"/>
</dbReference>
<dbReference type="InterPro" id="IPR008730">
    <property type="entry name" value="PBAN"/>
</dbReference>
<dbReference type="InterPro" id="IPR001484">
    <property type="entry name" value="Pyrokinin_CS"/>
</dbReference>
<dbReference type="Pfam" id="PF05874">
    <property type="entry name" value="PBAN"/>
    <property type="match status" value="1"/>
</dbReference>
<dbReference type="PROSITE" id="PS00539">
    <property type="entry name" value="PYROKININ"/>
    <property type="match status" value="3"/>
</dbReference>
<proteinExistence type="evidence at protein level"/>
<keyword id="KW-0027">Amidation</keyword>
<keyword id="KW-0165">Cleavage on pair of basic residues</keyword>
<keyword id="KW-0903">Direct protein sequencing</keyword>
<keyword id="KW-0372">Hormone</keyword>
<keyword id="KW-0527">Neuropeptide</keyword>
<keyword id="KW-0589">Pheromone response</keyword>
<keyword id="KW-0964">Secreted</keyword>
<keyword id="KW-0732">Signal</keyword>
<organism>
    <name type="scientific">Agrotis ipsilon</name>
    <name type="common">Black cutworm moth</name>
    <dbReference type="NCBI Taxonomy" id="56364"/>
    <lineage>
        <taxon>Eukaryota</taxon>
        <taxon>Metazoa</taxon>
        <taxon>Ecdysozoa</taxon>
        <taxon>Arthropoda</taxon>
        <taxon>Hexapoda</taxon>
        <taxon>Insecta</taxon>
        <taxon>Pterygota</taxon>
        <taxon>Neoptera</taxon>
        <taxon>Endopterygota</taxon>
        <taxon>Lepidoptera</taxon>
        <taxon>Glossata</taxon>
        <taxon>Ditrysia</taxon>
        <taxon>Noctuoidea</taxon>
        <taxon>Noctuidae</taxon>
        <taxon>Noctuinae</taxon>
        <taxon>Noctuini</taxon>
        <taxon>Agrotis</taxon>
    </lineage>
</organism>
<evidence type="ECO:0000250" key="1"/>
<evidence type="ECO:0000256" key="2">
    <source>
        <dbReference type="SAM" id="MobiDB-lite"/>
    </source>
</evidence>
<evidence type="ECO:0000269" key="3">
    <source>
    </source>
</evidence>
<evidence type="ECO:0000269" key="4">
    <source>
    </source>
</evidence>
<evidence type="ECO:0000303" key="5">
    <source>
    </source>
</evidence>
<evidence type="ECO:0000303" key="6">
    <source>
    </source>
</evidence>
<evidence type="ECO:0000305" key="7"/>
<evidence type="ECO:0000305" key="8">
    <source>
    </source>
</evidence>
<comment type="function">
    <molecule>Pheromone biosynthesis-activating neuropeptide</molecule>
    <text evidence="4">A hormone that controls sex pheromone production in female moths and pheromone responsiveness in male (PubMed:9753769).</text>
</comment>
<comment type="subcellular location">
    <subcellularLocation>
        <location evidence="4">Secreted</location>
    </subcellularLocation>
</comment>
<comment type="tissue specificity">
    <molecule>Pheromone biosynthesis-activating neuropeptide</molecule>
    <text evidence="4">Expressed in the mandibular, maxillary and labial neuromeres of the male and female brain-subesophageal ganglions, in the corpora cardiaca and all around the corpora allata, and at a lower level in the brain near the calyx and pedunculus of the mushroom body (at protein level) (PubMed:9753769). Expressed in larvae and adult of both sexes (at protein level) (PubMed:9753769).</text>
</comment>
<comment type="tissue specificity">
    <molecule>Diapause hormone</molecule>
    <text evidence="3">Expressed in corpora cardiaca (CC), corpora allata (CA) and gnathal ganglion (GNG) (at protein level) (PubMed:29466015). Expression in CC and CA detected in most animals, in GNG in some (at protein level) (PubMed:29466015).</text>
</comment>
<comment type="tissue specificity">
    <molecule>PBAN precursor-related peptide 1</molecule>
    <text evidence="3">Expression not detected in CC, CA, AL or GNG (at protein level) (PubMed:29466015).</text>
</comment>
<comment type="tissue specificity">
    <molecule>PBAN precursor-related peptide 2</molecule>
    <text evidence="3">Expression not detected in CC, CA, AL or GNG (at protein level) (PubMed:29466015).</text>
</comment>
<comment type="tissue specificity">
    <molecule>Alpha-subesophageal ganglion neuropeptide</molecule>
    <text evidence="3">Expressed in corpora cardiaca (CC), corpora allata (CA), antennal lobe (AL) and gnathal ganglion (GNG) (at protein level) (PubMed:29466015). Expression in CC, CA and GNG detected in most animals, expression in AL detected in few (at protein level) (PubMed:29466015).</text>
</comment>
<comment type="tissue specificity">
    <molecule>Beta-subesophageal ganglion neuropeptide</molecule>
    <text evidence="3">Expressed in corpora cardiaca (CC), corpora allata (CA), antennal lobe (AL) and gnathal ganglion (GNG) (at protein level) (PubMed:29466015). Expression in CC, CA and GNG detected in most animals, expression in AL detected in few (at protein level) (PubMed:29466015).</text>
</comment>
<comment type="tissue specificity">
    <molecule>Gamma-subesophageal ganglion neuropeptide</molecule>
    <text evidence="3">Expressed in corpora cardiaca (CC), corpora allata (CA), antennal lobe (AL) and gnathal ganglion (GNG) (at protein level) (PubMed:29466015). Expression in CC, CA and GNG detected in all animals, expression in AL detected in some (at protein level) (PubMed:29466015).</text>
</comment>
<comment type="tissue specificity">
    <molecule>PBAN precursor-related peptide 3</molecule>
    <text evidence="3">Expressed in corpora cardiaca (CC), corpora allata (CA), antennal lobe (AL) and gnathal ganglion (GNG) (at protein level) (PubMed:29466015). Expression in CC, CA and GNG detected in most animals, expression in AL detected in some animals (at protein level) (PubMed:29466015).</text>
</comment>
<comment type="mass spectrometry">
    <molecule>Diapause hormone</molecule>
    <text>Diapause hormone.</text>
</comment>
<comment type="mass spectrometry">
    <molecule>PBAN precursor-related peptide 1</molecule>
    <text>PBAN precursor-related peptide 1.</text>
</comment>
<comment type="mass spectrometry">
    <molecule>PBAN precursor-related peptide 2</molecule>
    <text>PBAN precursor-related peptide 2.</text>
</comment>
<comment type="mass spectrometry">
    <molecule>Alpha-subesophageal ganglion neuropeptide</molecule>
    <text>Alpha-subesophageal ganglion neuropeptide.</text>
</comment>
<comment type="mass spectrometry">
    <molecule>Beta-subesophageal ganglion neuropeptide</molecule>
    <text>Beta-subesophageal ganglion neuropeptide.</text>
</comment>
<comment type="mass spectrometry">
    <molecule>Gamma-subesophageal ganglion neuropeptide</molecule>
    <text>Gamma-subesophageal ganglion neuropeptide.</text>
</comment>
<comment type="mass spectrometry">
    <molecule>PBAN precursor-related peptide 3</molecule>
    <text>PBAN precursor-related peptide 3.</text>
</comment>
<comment type="miscellaneous">
    <text>Juvenile hormone seems to allow PBAN release, which then induces pheromone biosynthesis.</text>
</comment>
<comment type="similarity">
    <text evidence="7">Belongs to the pyrokinin family.</text>
</comment>
<name>PBAN_AGRIP</name>
<sequence>MYGAVLPGLFFIFISCVVASSNDVKDGGADRGAHSDRGGMWFGPRIGKRSLRMATEDNRQAFFKLLEAADALKYYYDQLPYEMQADEPEARVTKKVIFTPKLGRSLSYEDKMFDNVEFTPRLGRRLADDTPATPADQEMYRPDPEQIDSRTKYFSPRLGRTMNFSPRLGRELAYEMLPSKVRVVRSTNKTQST</sequence>
<protein>
    <recommendedName>
        <fullName>PBAN-type neuropeptides</fullName>
    </recommendedName>
    <alternativeName>
        <fullName>Pheromone/pyrokinin biosynthesis-activating neuropeptide</fullName>
    </alternativeName>
    <component>
        <recommendedName>
            <fullName evidence="5">Diapause hormone</fullName>
            <shortName>DH</shortName>
        </recommendedName>
    </component>
    <component>
        <recommendedName>
            <fullName evidence="8">PBAN precursor-related peptide 1</fullName>
            <shortName evidence="5">PBAN-PP-1</shortName>
        </recommendedName>
    </component>
    <component>
        <recommendedName>
            <fullName evidence="8">PBAN precursor-related peptide 2</fullName>
            <shortName evidence="5">PBAN-PP-2</shortName>
        </recommendedName>
    </component>
    <component>
        <recommendedName>
            <fullName evidence="8">Alpha-subesophageal ganglion neuropeptide</fullName>
        </recommendedName>
        <alternativeName>
            <fullName evidence="8">Alpha-SG neuropeptide</fullName>
            <shortName evidence="5">Alpha-SGNP</shortName>
        </alternativeName>
    </component>
    <component>
        <recommendedName>
            <fullName evidence="8">Beta-subesophageal ganglion neuropeptide</fullName>
        </recommendedName>
        <alternativeName>
            <fullName evidence="8">Beta-SG neuropeptide</fullName>
            <shortName evidence="5">Beta-SGNP</shortName>
        </alternativeName>
        <alternativeName>
            <fullName>Pyrokinin-1</fullName>
        </alternativeName>
    </component>
    <component>
        <recommendedName>
            <fullName evidence="6">Pheromone biosynthesis-activating neuropeptide</fullName>
            <shortName evidence="6">Agi-PBAN</shortName>
        </recommendedName>
        <alternativeName>
            <fullName>Pyrokinin-2</fullName>
        </alternativeName>
    </component>
    <component>
        <recommendedName>
            <fullName evidence="8">Gamma-subesophageal ganglion neuropeptide</fullName>
        </recommendedName>
        <alternativeName>
            <fullName evidence="8">Gamma-SG neuropeptide</fullName>
            <shortName evidence="5">Gamma-SGNP</shortName>
        </alternativeName>
        <alternativeName>
            <fullName>Pyrokinin-3</fullName>
        </alternativeName>
    </component>
    <component>
        <recommendedName>
            <fullName evidence="8">PBAN precursor-related peptide 3</fullName>
            <shortName evidence="5">PBAN-PP-3</shortName>
        </recommendedName>
    </component>
</protein>
<reference key="1">
    <citation type="journal article" date="1998" name="Insect Biochem. Mol. Biol.">
        <title>The pheromone biosynthesis activating neuropeptide (PBAN) of the black cutworm moth, Agrotis ipsilon: immunohistochemistry, molecular characterization and bioassay of its peptide sequence.</title>
        <authorList>
            <person name="Duportets L."/>
            <person name="Gadenne C."/>
            <person name="Dufour M.-C."/>
            <person name="Couillaud F."/>
        </authorList>
    </citation>
    <scope>NUCLEOTIDE SEQUENCE [MRNA]</scope>
    <scope>FUNCTION OF PHEROMONE BIOSYNTHESIS-ACTIVATING NEUROPEPTIDE</scope>
    <scope>SUBCELLULAR LOCATION</scope>
    <scope>TISSUE SPECIFICITY</scope>
    <source>
        <tissue evidence="6">Brain</tissue>
        <tissue evidence="6">Subesophageal ganglion</tissue>
    </source>
</reference>
<reference key="2">
    <citation type="journal article" date="2018" name="J. Proteome Res.">
        <title>Mating-induced differential peptidomics of neuropeptides and protein hormones in Agrotis ipsilon moths.</title>
        <authorList>
            <person name="Diesner M."/>
            <person name="Gallot A."/>
            <person name="Binz H."/>
            <person name="Gaertner C."/>
            <person name="Vitecek S."/>
            <person name="Kahnt J."/>
            <person name="Schachtner J."/>
            <person name="Jacquin-Joly E."/>
            <person name="Gadenne C."/>
        </authorList>
    </citation>
    <scope>NUCLEOTIDE SEQUENCE [MRNA]</scope>
    <scope>PROTEIN SEQUENCE OF 20-46; 50-74; 75-93; 96-102; 105-122; 161-168 AND 171-184</scope>
    <scope>TISSUE SPECIFICITY</scope>
    <scope>MASS SPECTROMETRY</scope>
    <scope>IDENTIFICATION BY MASS SPECTROMETRY</scope>
    <scope>AMIDATION AT ILE-46; LEU-102; LEU-122 AND LEU-168</scope>
</reference>